<gene>
    <name type="ordered locus">CLD_2825</name>
</gene>
<proteinExistence type="inferred from homology"/>
<name>Y2825_CLOBK</name>
<evidence type="ECO:0000255" key="1">
    <source>
        <dbReference type="HAMAP-Rule" id="MF_01845"/>
    </source>
</evidence>
<feature type="chain" id="PRO_0000339804" description="UPF0597 protein CLD_2825">
    <location>
        <begin position="1"/>
        <end position="426"/>
    </location>
</feature>
<comment type="similarity">
    <text evidence="1">Belongs to the UPF0597 family.</text>
</comment>
<organism>
    <name type="scientific">Clostridium botulinum (strain Okra / Type B1)</name>
    <dbReference type="NCBI Taxonomy" id="498213"/>
    <lineage>
        <taxon>Bacteria</taxon>
        <taxon>Bacillati</taxon>
        <taxon>Bacillota</taxon>
        <taxon>Clostridia</taxon>
        <taxon>Eubacteriales</taxon>
        <taxon>Clostridiaceae</taxon>
        <taxon>Clostridium</taxon>
    </lineage>
</organism>
<protein>
    <recommendedName>
        <fullName evidence="1">UPF0597 protein CLD_2825</fullName>
    </recommendedName>
</protein>
<reference key="1">
    <citation type="journal article" date="2007" name="PLoS ONE">
        <title>Analysis of the neurotoxin complex genes in Clostridium botulinum A1-A4 and B1 strains: BoNT/A3, /Ba4 and /B1 clusters are located within plasmids.</title>
        <authorList>
            <person name="Smith T.J."/>
            <person name="Hill K.K."/>
            <person name="Foley B.T."/>
            <person name="Detter J.C."/>
            <person name="Munk A.C."/>
            <person name="Bruce D.C."/>
            <person name="Doggett N.A."/>
            <person name="Smith L.A."/>
            <person name="Marks J.D."/>
            <person name="Xie G."/>
            <person name="Brettin T.S."/>
        </authorList>
    </citation>
    <scope>NUCLEOTIDE SEQUENCE [LARGE SCALE GENOMIC DNA]</scope>
    <source>
        <strain>Okra / Type B1</strain>
    </source>
</reference>
<accession>B1IM83</accession>
<sequence>MDENIIINILRKEMMPGLGVTEPASIALSSAKAYEVIGGEIKNIKIIADPGLFKNAFSCAIPGTKEVGNEMAALLGAICGDASLGLECLRKIKKEDVSKAKTMLDKIDIEIKSQTEGLYVESIVTTNNGIGRTIIRYKHDNIVLVEKNNKILYQKENTLNKSNNFSQEAIDSKKITEMKLDEIVEFVNNVNYEKIEFLLESIKMNKKLSEKGLEGLGIGLGKLILESCNENNYELYAEALTCSAIDARVSGATVPAMTVTGSGNHGIITTLPLLAIKEKKNLNNEVLARSIALSYIINIYIKEFSGKLSAFCGCAVAAGTGVSAGICYLLGGSLKEIENTIKNMASNITGMICTGGNLACSLKANTGVKAAFLSAKMALNNIVIPNKCGIVSNSIEDTMKNIGRIAYPGMMETDKEILNIMIESSK</sequence>
<dbReference type="EMBL" id="CP000939">
    <property type="protein sequence ID" value="ACA46846.1"/>
    <property type="molecule type" value="Genomic_DNA"/>
</dbReference>
<dbReference type="RefSeq" id="WP_014520772.1">
    <property type="nucleotide sequence ID" value="NC_010516.1"/>
</dbReference>
<dbReference type="SMR" id="B1IM83"/>
<dbReference type="KEGG" id="cbb:CLD_2825"/>
<dbReference type="HOGENOM" id="CLU_051840_0_0_9"/>
<dbReference type="Proteomes" id="UP000008541">
    <property type="component" value="Chromosome"/>
</dbReference>
<dbReference type="GO" id="GO:0080146">
    <property type="term" value="F:L-cysteine desulfhydrase activity"/>
    <property type="evidence" value="ECO:0007669"/>
    <property type="project" value="TreeGrafter"/>
</dbReference>
<dbReference type="GO" id="GO:0019450">
    <property type="term" value="P:L-cysteine catabolic process to pyruvate"/>
    <property type="evidence" value="ECO:0007669"/>
    <property type="project" value="TreeGrafter"/>
</dbReference>
<dbReference type="HAMAP" id="MF_01845">
    <property type="entry name" value="UPF0597"/>
    <property type="match status" value="1"/>
</dbReference>
<dbReference type="InterPro" id="IPR005130">
    <property type="entry name" value="Ser_deHydtase-like_asu"/>
</dbReference>
<dbReference type="InterPro" id="IPR021144">
    <property type="entry name" value="UPF0597"/>
</dbReference>
<dbReference type="PANTHER" id="PTHR30501">
    <property type="entry name" value="UPF0597 PROTEIN YHAM"/>
    <property type="match status" value="1"/>
</dbReference>
<dbReference type="PANTHER" id="PTHR30501:SF2">
    <property type="entry name" value="UPF0597 PROTEIN YHAM"/>
    <property type="match status" value="1"/>
</dbReference>
<dbReference type="Pfam" id="PF03313">
    <property type="entry name" value="SDH_alpha"/>
    <property type="match status" value="1"/>
</dbReference>
<dbReference type="PIRSF" id="PIRSF006054">
    <property type="entry name" value="UCP006054"/>
    <property type="match status" value="1"/>
</dbReference>